<protein>
    <recommendedName>
        <fullName evidence="1">Cytidylate kinase</fullName>
        <shortName evidence="1">CK</shortName>
        <ecNumber evidence="1">2.7.4.25</ecNumber>
    </recommendedName>
    <alternativeName>
        <fullName evidence="1">Cytidine monophosphate kinase</fullName>
        <shortName evidence="1">CMP kinase</shortName>
    </alternativeName>
</protein>
<comment type="catalytic activity">
    <reaction evidence="1">
        <text>CMP + ATP = CDP + ADP</text>
        <dbReference type="Rhea" id="RHEA:11600"/>
        <dbReference type="ChEBI" id="CHEBI:30616"/>
        <dbReference type="ChEBI" id="CHEBI:58069"/>
        <dbReference type="ChEBI" id="CHEBI:60377"/>
        <dbReference type="ChEBI" id="CHEBI:456216"/>
        <dbReference type="EC" id="2.7.4.25"/>
    </reaction>
</comment>
<comment type="catalytic activity">
    <reaction evidence="1">
        <text>dCMP + ATP = dCDP + ADP</text>
        <dbReference type="Rhea" id="RHEA:25094"/>
        <dbReference type="ChEBI" id="CHEBI:30616"/>
        <dbReference type="ChEBI" id="CHEBI:57566"/>
        <dbReference type="ChEBI" id="CHEBI:58593"/>
        <dbReference type="ChEBI" id="CHEBI:456216"/>
        <dbReference type="EC" id="2.7.4.25"/>
    </reaction>
</comment>
<comment type="subcellular location">
    <subcellularLocation>
        <location evidence="1">Cytoplasm</location>
    </subcellularLocation>
</comment>
<comment type="similarity">
    <text evidence="1">Belongs to the cytidylate kinase family. Type 1 subfamily.</text>
</comment>
<evidence type="ECO:0000255" key="1">
    <source>
        <dbReference type="HAMAP-Rule" id="MF_00238"/>
    </source>
</evidence>
<dbReference type="EC" id="2.7.4.25" evidence="1"/>
<dbReference type="EMBL" id="BX936398">
    <property type="protein sequence ID" value="CAH20656.1"/>
    <property type="molecule type" value="Genomic_DNA"/>
</dbReference>
<dbReference type="RefSeq" id="WP_002211324.1">
    <property type="nucleotide sequence ID" value="NZ_CP009712.1"/>
</dbReference>
<dbReference type="SMR" id="Q66CI7"/>
<dbReference type="GeneID" id="57977187"/>
<dbReference type="KEGG" id="ypo:BZ17_1102"/>
<dbReference type="KEGG" id="yps:YPTB1416"/>
<dbReference type="PATRIC" id="fig|273123.14.peg.1169"/>
<dbReference type="Proteomes" id="UP000001011">
    <property type="component" value="Chromosome"/>
</dbReference>
<dbReference type="GO" id="GO:0005829">
    <property type="term" value="C:cytosol"/>
    <property type="evidence" value="ECO:0007669"/>
    <property type="project" value="TreeGrafter"/>
</dbReference>
<dbReference type="GO" id="GO:0005524">
    <property type="term" value="F:ATP binding"/>
    <property type="evidence" value="ECO:0007669"/>
    <property type="project" value="UniProtKB-UniRule"/>
</dbReference>
<dbReference type="GO" id="GO:0036430">
    <property type="term" value="F:CMP kinase activity"/>
    <property type="evidence" value="ECO:0007669"/>
    <property type="project" value="RHEA"/>
</dbReference>
<dbReference type="GO" id="GO:0036431">
    <property type="term" value="F:dCMP kinase activity"/>
    <property type="evidence" value="ECO:0007669"/>
    <property type="project" value="RHEA"/>
</dbReference>
<dbReference type="GO" id="GO:0015949">
    <property type="term" value="P:nucleobase-containing small molecule interconversion"/>
    <property type="evidence" value="ECO:0007669"/>
    <property type="project" value="TreeGrafter"/>
</dbReference>
<dbReference type="GO" id="GO:0006220">
    <property type="term" value="P:pyrimidine nucleotide metabolic process"/>
    <property type="evidence" value="ECO:0007669"/>
    <property type="project" value="UniProtKB-UniRule"/>
</dbReference>
<dbReference type="CDD" id="cd02020">
    <property type="entry name" value="CMPK"/>
    <property type="match status" value="1"/>
</dbReference>
<dbReference type="FunFam" id="3.40.50.300:FF:000262">
    <property type="entry name" value="Cytidylate kinase"/>
    <property type="match status" value="1"/>
</dbReference>
<dbReference type="Gene3D" id="3.40.50.300">
    <property type="entry name" value="P-loop containing nucleotide triphosphate hydrolases"/>
    <property type="match status" value="1"/>
</dbReference>
<dbReference type="HAMAP" id="MF_00238">
    <property type="entry name" value="Cytidyl_kinase_type1"/>
    <property type="match status" value="1"/>
</dbReference>
<dbReference type="InterPro" id="IPR003136">
    <property type="entry name" value="Cytidylate_kin"/>
</dbReference>
<dbReference type="InterPro" id="IPR011994">
    <property type="entry name" value="Cytidylate_kinase_dom"/>
</dbReference>
<dbReference type="InterPro" id="IPR027417">
    <property type="entry name" value="P-loop_NTPase"/>
</dbReference>
<dbReference type="NCBIfam" id="TIGR00017">
    <property type="entry name" value="cmk"/>
    <property type="match status" value="1"/>
</dbReference>
<dbReference type="PANTHER" id="PTHR21299:SF2">
    <property type="entry name" value="CYTIDYLATE KINASE"/>
    <property type="match status" value="1"/>
</dbReference>
<dbReference type="PANTHER" id="PTHR21299">
    <property type="entry name" value="CYTIDYLATE KINASE/PANTOATE-BETA-ALANINE LIGASE"/>
    <property type="match status" value="1"/>
</dbReference>
<dbReference type="Pfam" id="PF02224">
    <property type="entry name" value="Cytidylate_kin"/>
    <property type="match status" value="1"/>
</dbReference>
<dbReference type="SUPFAM" id="SSF52540">
    <property type="entry name" value="P-loop containing nucleoside triphosphate hydrolases"/>
    <property type="match status" value="1"/>
</dbReference>
<accession>Q66CI7</accession>
<gene>
    <name evidence="1" type="primary">cmk</name>
    <name type="ordered locus">YPTB1416</name>
</gene>
<proteinExistence type="inferred from homology"/>
<sequence>MTAIAPVITVDGPSGAGKGTLCKALAESLNWRLLDSGAIYRVLALAALHHQVDISTEEALVPLAAHLDVRFVSQNGQLQVILEGEDVSNEIRTETVGNTASQAAAFPRVREALLRRQRAFREAPGLIADGRDMGTIVFPDAPVKIFLDASSQERAHRRMLQLQERGFNVNFERLLAEIQERDNRDRNRSVAPLVPAADALVLDSTSMSIEQVIEQALAYAQRILALPLKK</sequence>
<feature type="chain" id="PRO_0000132007" description="Cytidylate kinase">
    <location>
        <begin position="1"/>
        <end position="230"/>
    </location>
</feature>
<feature type="binding site" evidence="1">
    <location>
        <begin position="12"/>
        <end position="20"/>
    </location>
    <ligand>
        <name>ATP</name>
        <dbReference type="ChEBI" id="CHEBI:30616"/>
    </ligand>
</feature>
<name>KCY_YERPS</name>
<keyword id="KW-0067">ATP-binding</keyword>
<keyword id="KW-0963">Cytoplasm</keyword>
<keyword id="KW-0418">Kinase</keyword>
<keyword id="KW-0547">Nucleotide-binding</keyword>
<keyword id="KW-0808">Transferase</keyword>
<reference key="1">
    <citation type="journal article" date="2004" name="Proc. Natl. Acad. Sci. U.S.A.">
        <title>Insights into the evolution of Yersinia pestis through whole-genome comparison with Yersinia pseudotuberculosis.</title>
        <authorList>
            <person name="Chain P.S.G."/>
            <person name="Carniel E."/>
            <person name="Larimer F.W."/>
            <person name="Lamerdin J."/>
            <person name="Stoutland P.O."/>
            <person name="Regala W.M."/>
            <person name="Georgescu A.M."/>
            <person name="Vergez L.M."/>
            <person name="Land M.L."/>
            <person name="Motin V.L."/>
            <person name="Brubaker R.R."/>
            <person name="Fowler J."/>
            <person name="Hinnebusch J."/>
            <person name="Marceau M."/>
            <person name="Medigue C."/>
            <person name="Simonet M."/>
            <person name="Chenal-Francisque V."/>
            <person name="Souza B."/>
            <person name="Dacheux D."/>
            <person name="Elliott J.M."/>
            <person name="Derbise A."/>
            <person name="Hauser L.J."/>
            <person name="Garcia E."/>
        </authorList>
    </citation>
    <scope>NUCLEOTIDE SEQUENCE [LARGE SCALE GENOMIC DNA]</scope>
    <source>
        <strain>IP32953</strain>
    </source>
</reference>
<organism>
    <name type="scientific">Yersinia pseudotuberculosis serotype I (strain IP32953)</name>
    <dbReference type="NCBI Taxonomy" id="273123"/>
    <lineage>
        <taxon>Bacteria</taxon>
        <taxon>Pseudomonadati</taxon>
        <taxon>Pseudomonadota</taxon>
        <taxon>Gammaproteobacteria</taxon>
        <taxon>Enterobacterales</taxon>
        <taxon>Yersiniaceae</taxon>
        <taxon>Yersinia</taxon>
    </lineage>
</organism>